<feature type="chain" id="PRO_0000384237" description="Maintenance of mitochondrial morphology protein 1">
    <location>
        <begin position="1"/>
        <end position="471"/>
    </location>
</feature>
<feature type="topological domain" description="Lumenal" evidence="1">
    <location>
        <begin position="1"/>
        <end position="21"/>
    </location>
</feature>
<feature type="transmembrane region" description="Helical" evidence="1">
    <location>
        <begin position="22"/>
        <end position="42"/>
    </location>
</feature>
<feature type="topological domain" description="Cytoplasmic" evidence="1">
    <location>
        <begin position="43"/>
        <end position="471"/>
    </location>
</feature>
<feature type="domain" description="SMP-LTD" evidence="1">
    <location>
        <begin position="128"/>
        <end position="370"/>
    </location>
</feature>
<feature type="region of interest" description="Disordered" evidence="2">
    <location>
        <begin position="271"/>
        <end position="306"/>
    </location>
</feature>
<feature type="region of interest" description="Disordered" evidence="2">
    <location>
        <begin position="395"/>
        <end position="415"/>
    </location>
</feature>
<feature type="region of interest" description="Disordered" evidence="2">
    <location>
        <begin position="448"/>
        <end position="471"/>
    </location>
</feature>
<feature type="compositionally biased region" description="Basic and acidic residues" evidence="2">
    <location>
        <begin position="280"/>
        <end position="295"/>
    </location>
</feature>
<feature type="compositionally biased region" description="Polar residues" evidence="2">
    <location>
        <begin position="401"/>
        <end position="410"/>
    </location>
</feature>
<gene>
    <name evidence="1" type="primary">MMM1</name>
    <name type="ORF">MCYG_05411</name>
</gene>
<keyword id="KW-0256">Endoplasmic reticulum</keyword>
<keyword id="KW-0445">Lipid transport</keyword>
<keyword id="KW-0446">Lipid-binding</keyword>
<keyword id="KW-0472">Membrane</keyword>
<keyword id="KW-1185">Reference proteome</keyword>
<keyword id="KW-0812">Transmembrane</keyword>
<keyword id="KW-1133">Transmembrane helix</keyword>
<keyword id="KW-0813">Transport</keyword>
<protein>
    <recommendedName>
        <fullName evidence="1">Maintenance of mitochondrial morphology protein 1</fullName>
    </recommendedName>
</protein>
<proteinExistence type="inferred from homology"/>
<dbReference type="EMBL" id="DS995705">
    <property type="protein sequence ID" value="EEQ32592.1"/>
    <property type="molecule type" value="Genomic_DNA"/>
</dbReference>
<dbReference type="RefSeq" id="XP_002845542.1">
    <property type="nucleotide sequence ID" value="XM_002845496.1"/>
</dbReference>
<dbReference type="SMR" id="C5FRT9"/>
<dbReference type="STRING" id="554155.C5FRT9"/>
<dbReference type="GeneID" id="9228752"/>
<dbReference type="VEuPathDB" id="FungiDB:MCYG_05411"/>
<dbReference type="eggNOG" id="ENOG502QUUW">
    <property type="taxonomic scope" value="Eukaryota"/>
</dbReference>
<dbReference type="HOGENOM" id="CLU_032730_1_0_1"/>
<dbReference type="OMA" id="WSFTQGL"/>
<dbReference type="OrthoDB" id="5376138at2759"/>
<dbReference type="Proteomes" id="UP000002035">
    <property type="component" value="Unassembled WGS sequence"/>
</dbReference>
<dbReference type="GO" id="GO:0005789">
    <property type="term" value="C:endoplasmic reticulum membrane"/>
    <property type="evidence" value="ECO:0007669"/>
    <property type="project" value="UniProtKB-SubCell"/>
</dbReference>
<dbReference type="GO" id="GO:0032865">
    <property type="term" value="C:ERMES complex"/>
    <property type="evidence" value="ECO:0007669"/>
    <property type="project" value="UniProtKB-UniRule"/>
</dbReference>
<dbReference type="GO" id="GO:0008289">
    <property type="term" value="F:lipid binding"/>
    <property type="evidence" value="ECO:0007669"/>
    <property type="project" value="UniProtKB-KW"/>
</dbReference>
<dbReference type="GO" id="GO:0000002">
    <property type="term" value="P:mitochondrial genome maintenance"/>
    <property type="evidence" value="ECO:0007669"/>
    <property type="project" value="UniProtKB-UniRule"/>
</dbReference>
<dbReference type="GO" id="GO:1990456">
    <property type="term" value="P:mitochondrion-endoplasmic reticulum membrane tethering"/>
    <property type="evidence" value="ECO:0007669"/>
    <property type="project" value="TreeGrafter"/>
</dbReference>
<dbReference type="GO" id="GO:0015914">
    <property type="term" value="P:phospholipid transport"/>
    <property type="evidence" value="ECO:0007669"/>
    <property type="project" value="TreeGrafter"/>
</dbReference>
<dbReference type="GO" id="GO:0045040">
    <property type="term" value="P:protein insertion into mitochondrial outer membrane"/>
    <property type="evidence" value="ECO:0007669"/>
    <property type="project" value="UniProtKB-UniRule"/>
</dbReference>
<dbReference type="CDD" id="cd21671">
    <property type="entry name" value="SMP_Mmm1"/>
    <property type="match status" value="1"/>
</dbReference>
<dbReference type="HAMAP" id="MF_03103">
    <property type="entry name" value="Mmm1"/>
    <property type="match status" value="1"/>
</dbReference>
<dbReference type="InterPro" id="IPR027537">
    <property type="entry name" value="Mmm1"/>
</dbReference>
<dbReference type="InterPro" id="IPR019411">
    <property type="entry name" value="MMM1_dom"/>
</dbReference>
<dbReference type="InterPro" id="IPR031468">
    <property type="entry name" value="SMP_LBD"/>
</dbReference>
<dbReference type="PANTHER" id="PTHR13466:SF0">
    <property type="entry name" value="SMP-LTD DOMAIN-CONTAINING PROTEIN"/>
    <property type="match status" value="1"/>
</dbReference>
<dbReference type="PANTHER" id="PTHR13466">
    <property type="entry name" value="TEX2 PROTEIN-RELATED"/>
    <property type="match status" value="1"/>
</dbReference>
<dbReference type="Pfam" id="PF10296">
    <property type="entry name" value="MMM1"/>
    <property type="match status" value="1"/>
</dbReference>
<dbReference type="PROSITE" id="PS51847">
    <property type="entry name" value="SMP"/>
    <property type="match status" value="1"/>
</dbReference>
<name>MMM1_ARTOC</name>
<organism>
    <name type="scientific">Arthroderma otae (strain ATCC MYA-4605 / CBS 113480)</name>
    <name type="common">Microsporum canis</name>
    <dbReference type="NCBI Taxonomy" id="554155"/>
    <lineage>
        <taxon>Eukaryota</taxon>
        <taxon>Fungi</taxon>
        <taxon>Dikarya</taxon>
        <taxon>Ascomycota</taxon>
        <taxon>Pezizomycotina</taxon>
        <taxon>Eurotiomycetes</taxon>
        <taxon>Eurotiomycetidae</taxon>
        <taxon>Onygenales</taxon>
        <taxon>Arthrodermataceae</taxon>
        <taxon>Microsporum</taxon>
    </lineage>
</organism>
<reference key="1">
    <citation type="journal article" date="2012" name="MBio">
        <title>Comparative genome analysis of Trichophyton rubrum and related dermatophytes reveals candidate genes involved in infection.</title>
        <authorList>
            <person name="Martinez D.A."/>
            <person name="Oliver B.G."/>
            <person name="Graeser Y."/>
            <person name="Goldberg J.M."/>
            <person name="Li W."/>
            <person name="Martinez-Rossi N.M."/>
            <person name="Monod M."/>
            <person name="Shelest E."/>
            <person name="Barton R.C."/>
            <person name="Birch E."/>
            <person name="Brakhage A.A."/>
            <person name="Chen Z."/>
            <person name="Gurr S.J."/>
            <person name="Heiman D."/>
            <person name="Heitman J."/>
            <person name="Kosti I."/>
            <person name="Rossi A."/>
            <person name="Saif S."/>
            <person name="Samalova M."/>
            <person name="Saunders C.W."/>
            <person name="Shea T."/>
            <person name="Summerbell R.C."/>
            <person name="Xu J."/>
            <person name="Young S."/>
            <person name="Zeng Q."/>
            <person name="Birren B.W."/>
            <person name="Cuomo C.A."/>
            <person name="White T.C."/>
        </authorList>
    </citation>
    <scope>NUCLEOTIDE SEQUENCE [LARGE SCALE GENOMIC DNA]</scope>
    <source>
        <strain>ATCC MYA-4605 / CBS 113480</strain>
    </source>
</reference>
<accession>C5FRT9</accession>
<comment type="function">
    <text evidence="1">Component of the ERMES/MDM complex, which serves as a molecular tether to connect the endoplasmic reticulum (ER) and mitochondria. Components of this complex are involved in the control of mitochondrial shape and protein biogenesis, and function in nonvesicular lipid trafficking between the ER and mitochondria. The MDM12-MMM1 subcomplex functions in the major beta-barrel assembly pathway that is responsible for biogenesis of all outer membrane beta-barrel proteins, and acts in a late step after the SAM complex. The MDM10-MDM12-MMM1 subcomplex further acts in the TOM40-specific pathway after the action of the MDM12-MMM1 complex. Essential for establishing and maintaining the structure of mitochondria and maintenance of mtDNA nucleoids.</text>
</comment>
<comment type="subunit">
    <text evidence="1">Homodimer. Component of the ER-mitochondria encounter structure (ERMES) or MDM complex, composed of MMM1, MDM10, MDM12 and MDM34. A MMM1 homodimer associates with one molecule of MDM12 on each side in a pairwise head-to-tail manner, and the SMP-LTD domains of MMM1 and MDM12 generate a continuous hydrophobic tunnel for phospholipid trafficking.</text>
</comment>
<comment type="subcellular location">
    <subcellularLocation>
        <location evidence="1">Endoplasmic reticulum membrane</location>
        <topology evidence="1">Single-pass type I membrane protein</topology>
    </subcellularLocation>
    <text evidence="1">The ERMES/MDM complex localizes to a few discrete foci (around 10 per single cell), that represent mitochondria-endoplasmic reticulum junctions. These foci are often found next to mtDNA nucleoids.</text>
</comment>
<comment type="domain">
    <text evidence="1">The SMP-LTD domain is a barrel-like domain that can bind various types of glycerophospholipids in its interior and mediate their transfer between two adjacent bilayers.</text>
</comment>
<comment type="similarity">
    <text evidence="1">Belongs to the MMM1 family.</text>
</comment>
<sequence>MSSPQNTSCPPSQHSLSFTQGLLLGQLSVVLLIGAFIKFFIFGESPSSSSRGISQRTAPRKRSYSVNSTLFRDAASRSLKESASSNVLRPVPSSSTNTKSILRKTYYNAIPTNFQKNSRHRLHHSTHQPESLDWFNVLIAQLIAQYRQTAYILKDSPTSSILDSLTETLNNVDKKPSWIDRINVTDISIGEEFPIFSNCRVIAVEDPNSDGGRLQALMDVDLSDDNLSLAIETNLLLNYPKPASAVLPVALSVSVVRFSGTLCISFVPSPGTTESSPHLPHPENQNESKPSRQDPEIPTNKDGVRSGIPKTSLAFSFLPDYRLDISVRSLIGSRSRLQDVPKVAQLVEARVQSWFEDRVVEPRVQLVALPGIWPRMGRTGVRAQEDHDAVSIDSEDPATKATHSGFTPVNANRDGLQASRDLNMEGLRYRRGNAGDEATTDEYERLTRGDTQSVGEQLRIPGSLPGAPAVA</sequence>
<evidence type="ECO:0000255" key="1">
    <source>
        <dbReference type="HAMAP-Rule" id="MF_03103"/>
    </source>
</evidence>
<evidence type="ECO:0000256" key="2">
    <source>
        <dbReference type="SAM" id="MobiDB-lite"/>
    </source>
</evidence>